<evidence type="ECO:0000255" key="1">
    <source>
        <dbReference type="HAMAP-Rule" id="MF_00137"/>
    </source>
</evidence>
<proteinExistence type="inferred from homology"/>
<accession>Q970V9</accession>
<dbReference type="EC" id="6.3.2.6" evidence="1"/>
<dbReference type="EMBL" id="BA000023">
    <property type="protein sequence ID" value="BAB66564.1"/>
    <property type="molecule type" value="Genomic_DNA"/>
</dbReference>
<dbReference type="RefSeq" id="WP_010979542.1">
    <property type="nucleotide sequence ID" value="NC_003106.2"/>
</dbReference>
<dbReference type="SMR" id="Q970V9"/>
<dbReference type="STRING" id="273063.STK_14930"/>
<dbReference type="GeneID" id="1459528"/>
<dbReference type="KEGG" id="sto:STK_14930"/>
<dbReference type="PATRIC" id="fig|273063.9.peg.1699"/>
<dbReference type="eggNOG" id="arCOG04421">
    <property type="taxonomic scope" value="Archaea"/>
</dbReference>
<dbReference type="OrthoDB" id="10775at2157"/>
<dbReference type="UniPathway" id="UPA00074">
    <property type="reaction ID" value="UER00131"/>
</dbReference>
<dbReference type="Proteomes" id="UP000001015">
    <property type="component" value="Chromosome"/>
</dbReference>
<dbReference type="GO" id="GO:0005524">
    <property type="term" value="F:ATP binding"/>
    <property type="evidence" value="ECO:0007669"/>
    <property type="project" value="UniProtKB-KW"/>
</dbReference>
<dbReference type="GO" id="GO:0004639">
    <property type="term" value="F:phosphoribosylaminoimidazolesuccinocarboxamide synthase activity"/>
    <property type="evidence" value="ECO:0007669"/>
    <property type="project" value="UniProtKB-UniRule"/>
</dbReference>
<dbReference type="GO" id="GO:0006189">
    <property type="term" value="P:'de novo' IMP biosynthetic process"/>
    <property type="evidence" value="ECO:0007669"/>
    <property type="project" value="UniProtKB-UniRule"/>
</dbReference>
<dbReference type="GO" id="GO:0009236">
    <property type="term" value="P:cobalamin biosynthetic process"/>
    <property type="evidence" value="ECO:0007669"/>
    <property type="project" value="InterPro"/>
</dbReference>
<dbReference type="CDD" id="cd01415">
    <property type="entry name" value="SAICAR_synt_PurC"/>
    <property type="match status" value="1"/>
</dbReference>
<dbReference type="Gene3D" id="3.30.470.20">
    <property type="entry name" value="ATP-grasp fold, B domain"/>
    <property type="match status" value="1"/>
</dbReference>
<dbReference type="Gene3D" id="3.30.200.20">
    <property type="entry name" value="Phosphorylase Kinase, domain 1"/>
    <property type="match status" value="1"/>
</dbReference>
<dbReference type="HAMAP" id="MF_00137">
    <property type="entry name" value="SAICAR_synth"/>
    <property type="match status" value="1"/>
</dbReference>
<dbReference type="InterPro" id="IPR028923">
    <property type="entry name" value="SAICAR_synt/ADE2_N"/>
</dbReference>
<dbReference type="InterPro" id="IPR033934">
    <property type="entry name" value="SAICAR_synt_PurC"/>
</dbReference>
<dbReference type="InterPro" id="IPR001636">
    <property type="entry name" value="SAICAR_synth"/>
</dbReference>
<dbReference type="InterPro" id="IPR050089">
    <property type="entry name" value="SAICAR_synthetase"/>
</dbReference>
<dbReference type="InterPro" id="IPR018236">
    <property type="entry name" value="SAICAR_synthetase_CS"/>
</dbReference>
<dbReference type="NCBIfam" id="TIGR00081">
    <property type="entry name" value="purC"/>
    <property type="match status" value="1"/>
</dbReference>
<dbReference type="PANTHER" id="PTHR43599">
    <property type="entry name" value="MULTIFUNCTIONAL PROTEIN ADE2"/>
    <property type="match status" value="1"/>
</dbReference>
<dbReference type="PANTHER" id="PTHR43599:SF3">
    <property type="entry name" value="SI:DKEY-6E2.2"/>
    <property type="match status" value="1"/>
</dbReference>
<dbReference type="Pfam" id="PF01259">
    <property type="entry name" value="SAICAR_synt"/>
    <property type="match status" value="1"/>
</dbReference>
<dbReference type="SUPFAM" id="SSF56104">
    <property type="entry name" value="SAICAR synthase-like"/>
    <property type="match status" value="1"/>
</dbReference>
<dbReference type="PROSITE" id="PS01057">
    <property type="entry name" value="SAICAR_SYNTHETASE_1"/>
    <property type="match status" value="1"/>
</dbReference>
<name>PUR7_SULTO</name>
<protein>
    <recommendedName>
        <fullName evidence="1">Phosphoribosylaminoimidazole-succinocarboxamide synthase</fullName>
        <ecNumber evidence="1">6.3.2.6</ecNumber>
    </recommendedName>
    <alternativeName>
        <fullName evidence="1">SAICAR synthetase</fullName>
    </alternativeName>
</protein>
<sequence>MEFLKLSEGKTKEVYAYDDSHVLLKFKDSITAGDGARKDILEGKGILNAQTSAFLFRLLESKGIETHYIGMFDERTMIAKKLKMIPVEVVLRNIATGSIVKRLPIKEGEVFEPPIIEFFLKDDERHDPMLNYYHMEYLKLMTRKEAEKIEEIMLKVNEILYPFFRSKKLLLYDFKLEFGRVNDKLIIGDELTLDSMRIREEGSGRILDKDLYRKGADLETVKKAYEEFFKRISE</sequence>
<gene>
    <name evidence="1" type="primary">purC</name>
    <name type="ordered locus">STK_14930</name>
</gene>
<reference key="1">
    <citation type="journal article" date="2001" name="DNA Res.">
        <title>Complete genome sequence of an aerobic thermoacidophilic Crenarchaeon, Sulfolobus tokodaii strain7.</title>
        <authorList>
            <person name="Kawarabayasi Y."/>
            <person name="Hino Y."/>
            <person name="Horikawa H."/>
            <person name="Jin-no K."/>
            <person name="Takahashi M."/>
            <person name="Sekine M."/>
            <person name="Baba S."/>
            <person name="Ankai A."/>
            <person name="Kosugi H."/>
            <person name="Hosoyama A."/>
            <person name="Fukui S."/>
            <person name="Nagai Y."/>
            <person name="Nishijima K."/>
            <person name="Otsuka R."/>
            <person name="Nakazawa H."/>
            <person name="Takamiya M."/>
            <person name="Kato Y."/>
            <person name="Yoshizawa T."/>
            <person name="Tanaka T."/>
            <person name="Kudoh Y."/>
            <person name="Yamazaki J."/>
            <person name="Kushida N."/>
            <person name="Oguchi A."/>
            <person name="Aoki K."/>
            <person name="Masuda S."/>
            <person name="Yanagii M."/>
            <person name="Nishimura M."/>
            <person name="Yamagishi A."/>
            <person name="Oshima T."/>
            <person name="Kikuchi H."/>
        </authorList>
    </citation>
    <scope>NUCLEOTIDE SEQUENCE [LARGE SCALE GENOMIC DNA]</scope>
    <source>
        <strain>DSM 16993 / JCM 10545 / NBRC 100140 / 7</strain>
    </source>
</reference>
<keyword id="KW-0067">ATP-binding</keyword>
<keyword id="KW-0436">Ligase</keyword>
<keyword id="KW-0547">Nucleotide-binding</keyword>
<keyword id="KW-0658">Purine biosynthesis</keyword>
<keyword id="KW-1185">Reference proteome</keyword>
<comment type="catalytic activity">
    <reaction evidence="1">
        <text>5-amino-1-(5-phospho-D-ribosyl)imidazole-4-carboxylate + L-aspartate + ATP = (2S)-2-[5-amino-1-(5-phospho-beta-D-ribosyl)imidazole-4-carboxamido]succinate + ADP + phosphate + 2 H(+)</text>
        <dbReference type="Rhea" id="RHEA:22628"/>
        <dbReference type="ChEBI" id="CHEBI:15378"/>
        <dbReference type="ChEBI" id="CHEBI:29991"/>
        <dbReference type="ChEBI" id="CHEBI:30616"/>
        <dbReference type="ChEBI" id="CHEBI:43474"/>
        <dbReference type="ChEBI" id="CHEBI:58443"/>
        <dbReference type="ChEBI" id="CHEBI:77657"/>
        <dbReference type="ChEBI" id="CHEBI:456216"/>
        <dbReference type="EC" id="6.3.2.6"/>
    </reaction>
</comment>
<comment type="pathway">
    <text evidence="1">Purine metabolism; IMP biosynthesis via de novo pathway; 5-amino-1-(5-phospho-D-ribosyl)imidazole-4-carboxamide from 5-amino-1-(5-phospho-D-ribosyl)imidazole-4-carboxylate: step 1/2.</text>
</comment>
<comment type="similarity">
    <text evidence="1">Belongs to the SAICAR synthetase family.</text>
</comment>
<organism>
    <name type="scientific">Sulfurisphaera tokodaii (strain DSM 16993 / JCM 10545 / NBRC 100140 / 7)</name>
    <name type="common">Sulfolobus tokodaii</name>
    <dbReference type="NCBI Taxonomy" id="273063"/>
    <lineage>
        <taxon>Archaea</taxon>
        <taxon>Thermoproteota</taxon>
        <taxon>Thermoprotei</taxon>
        <taxon>Sulfolobales</taxon>
        <taxon>Sulfolobaceae</taxon>
        <taxon>Sulfurisphaera</taxon>
    </lineage>
</organism>
<feature type="chain" id="PRO_0000100920" description="Phosphoribosylaminoimidazole-succinocarboxamide synthase">
    <location>
        <begin position="1"/>
        <end position="234"/>
    </location>
</feature>